<reference key="1">
    <citation type="journal article" date="2004" name="Genome Res.">
        <title>The status, quality, and expansion of the NIH full-length cDNA project: the Mammalian Gene Collection (MGC).</title>
        <authorList>
            <consortium name="The MGC Project Team"/>
        </authorList>
    </citation>
    <scope>NUCLEOTIDE SEQUENCE [LARGE SCALE MRNA]</scope>
    <source>
        <tissue>Thymus</tissue>
    </source>
</reference>
<feature type="chain" id="PRO_0000405808" description="Mini-chromosome maintenance complex-binding protein">
    <location>
        <begin position="1"/>
        <end position="642"/>
    </location>
</feature>
<feature type="region of interest" description="Disordered" evidence="3">
    <location>
        <begin position="151"/>
        <end position="200"/>
    </location>
</feature>
<feature type="compositionally biased region" description="Polar residues" evidence="3">
    <location>
        <begin position="151"/>
        <end position="161"/>
    </location>
</feature>
<feature type="modified residue" description="Phosphoserine" evidence="2">
    <location>
        <position position="154"/>
    </location>
</feature>
<feature type="modified residue" description="Phosphothreonine" evidence="2">
    <location>
        <position position="160"/>
    </location>
</feature>
<feature type="modified residue" description="Phosphoserine" evidence="2">
    <location>
        <position position="167"/>
    </location>
</feature>
<feature type="modified residue" description="Phosphoserine" evidence="2">
    <location>
        <position position="298"/>
    </location>
</feature>
<organism>
    <name type="scientific">Rattus norvegicus</name>
    <name type="common">Rat</name>
    <dbReference type="NCBI Taxonomy" id="10116"/>
    <lineage>
        <taxon>Eukaryota</taxon>
        <taxon>Metazoa</taxon>
        <taxon>Chordata</taxon>
        <taxon>Craniata</taxon>
        <taxon>Vertebrata</taxon>
        <taxon>Euteleostomi</taxon>
        <taxon>Mammalia</taxon>
        <taxon>Eutheria</taxon>
        <taxon>Euarchontoglires</taxon>
        <taxon>Glires</taxon>
        <taxon>Rodentia</taxon>
        <taxon>Myomorpha</taxon>
        <taxon>Muroidea</taxon>
        <taxon>Muridae</taxon>
        <taxon>Murinae</taxon>
        <taxon>Rattus</taxon>
    </lineage>
</organism>
<comment type="function">
    <text evidence="1">Associated component of the MCM complex that acts as a regulator of DNA replication. Binds to the MCM complex during late S phase and promotes the disassembly of the MCM complex from chromatin, thereby acting as a key regulator of pre-replication complex (pre-RC) unloading from replicated DNA. Can dissociate the MCM complex without addition of ATP; probably acts by destabilizing interactions of each individual subunits of the MCM complex. Required for sister chromatid cohesion (By similarity).</text>
</comment>
<comment type="subunit">
    <text evidence="1">Interacts with the MCM complex: associates with the MCM3-7 complex which lacks MCM2, while it does not interact with the MCM complex when MCM2 is present (MCM2-7 complex). Interacts with the RPA complex, when composed of all RPA1, RPA2 and RPA3 components, but not with RPA1 or RPA2 alone (By similarity).</text>
</comment>
<comment type="subcellular location">
    <subcellularLocation>
        <location evidence="1">Nucleus</location>
    </subcellularLocation>
    <text evidence="1">Associates with chromatin. Highly associated with chromatin in G1/S and S phases, reduced binding to chromatin in G2, and further decreased binding in early M phase. It then reassociates with chromatin in late M phase. Dissociates from chromatin later than component of the MCM complex (By similarity).</text>
</comment>
<comment type="similarity">
    <text evidence="4">Belongs to the MCMBP family.</text>
</comment>
<dbReference type="EMBL" id="BC160884">
    <property type="protein sequence ID" value="AAI60884.1"/>
    <property type="molecule type" value="mRNA"/>
</dbReference>
<dbReference type="RefSeq" id="NP_001034697.2">
    <property type="nucleotide sequence ID" value="NM_001039608.2"/>
</dbReference>
<dbReference type="FunCoup" id="B1H268">
    <property type="interactions" value="3686"/>
</dbReference>
<dbReference type="STRING" id="10116.ENSRNOP00000027644"/>
<dbReference type="iPTMnet" id="B1H268"/>
<dbReference type="PhosphoSitePlus" id="B1H268"/>
<dbReference type="jPOST" id="B1H268"/>
<dbReference type="PaxDb" id="10116-ENSRNOP00000027644"/>
<dbReference type="PeptideAtlas" id="B1H268"/>
<dbReference type="GeneID" id="309009"/>
<dbReference type="KEGG" id="rno:309009"/>
<dbReference type="UCSC" id="RGD:1306730">
    <property type="organism name" value="rat"/>
</dbReference>
<dbReference type="AGR" id="RGD:1306730"/>
<dbReference type="CTD" id="79892"/>
<dbReference type="RGD" id="1306730">
    <property type="gene designation" value="Mcmbp"/>
</dbReference>
<dbReference type="VEuPathDB" id="HostDB:ENSRNOG00000020394"/>
<dbReference type="eggNOG" id="KOG2545">
    <property type="taxonomic scope" value="Eukaryota"/>
</dbReference>
<dbReference type="HOGENOM" id="CLU_029811_0_0_1"/>
<dbReference type="InParanoid" id="B1H268"/>
<dbReference type="OrthoDB" id="329666at2759"/>
<dbReference type="PhylomeDB" id="B1H268"/>
<dbReference type="TreeFam" id="TF324793"/>
<dbReference type="PRO" id="PR:B1H268"/>
<dbReference type="Proteomes" id="UP000002494">
    <property type="component" value="Chromosome 1"/>
</dbReference>
<dbReference type="Bgee" id="ENSRNOG00000020394">
    <property type="expression patterns" value="Expressed in thymus and 19 other cell types or tissues"/>
</dbReference>
<dbReference type="GO" id="GO:0042555">
    <property type="term" value="C:MCM complex"/>
    <property type="evidence" value="ECO:0000266"/>
    <property type="project" value="RGD"/>
</dbReference>
<dbReference type="GO" id="GO:0005634">
    <property type="term" value="C:nucleus"/>
    <property type="evidence" value="ECO:0000250"/>
    <property type="project" value="UniProtKB"/>
</dbReference>
<dbReference type="GO" id="GO:0003682">
    <property type="term" value="F:chromatin binding"/>
    <property type="evidence" value="ECO:0000250"/>
    <property type="project" value="UniProtKB"/>
</dbReference>
<dbReference type="GO" id="GO:0051301">
    <property type="term" value="P:cell division"/>
    <property type="evidence" value="ECO:0007669"/>
    <property type="project" value="UniProtKB-KW"/>
</dbReference>
<dbReference type="GO" id="GO:0006261">
    <property type="term" value="P:DNA-templated DNA replication"/>
    <property type="evidence" value="ECO:0000250"/>
    <property type="project" value="UniProtKB"/>
</dbReference>
<dbReference type="GO" id="GO:0007062">
    <property type="term" value="P:sister chromatid cohesion"/>
    <property type="evidence" value="ECO:0000250"/>
    <property type="project" value="UniProtKB"/>
</dbReference>
<dbReference type="InterPro" id="IPR019140">
    <property type="entry name" value="MCM_complex-bd"/>
</dbReference>
<dbReference type="PANTHER" id="PTHR13489">
    <property type="entry name" value="MINI-CHROMOSOME MAINTENANCE COMPLEX-BINDING PROTEIN"/>
    <property type="match status" value="1"/>
</dbReference>
<dbReference type="PANTHER" id="PTHR13489:SF0">
    <property type="entry name" value="MINI-CHROMOSOME MAINTENANCE COMPLEX-BINDING PROTEIN"/>
    <property type="match status" value="1"/>
</dbReference>
<dbReference type="Pfam" id="PF09739">
    <property type="entry name" value="MCM_bind"/>
    <property type="match status" value="1"/>
</dbReference>
<evidence type="ECO:0000250" key="1"/>
<evidence type="ECO:0000250" key="2">
    <source>
        <dbReference type="UniProtKB" id="Q9BTE3"/>
    </source>
</evidence>
<evidence type="ECO:0000256" key="3">
    <source>
        <dbReference type="SAM" id="MobiDB-lite"/>
    </source>
</evidence>
<evidence type="ECO:0000305" key="4"/>
<proteinExistence type="evidence at transcript level"/>
<keyword id="KW-0131">Cell cycle</keyword>
<keyword id="KW-0132">Cell division</keyword>
<keyword id="KW-0235">DNA replication</keyword>
<keyword id="KW-0498">Mitosis</keyword>
<keyword id="KW-0539">Nucleus</keyword>
<keyword id="KW-0597">Phosphoprotein</keyword>
<keyword id="KW-1185">Reference proteome</keyword>
<accession>B1H268</accession>
<name>MCMBP_RAT</name>
<protein>
    <recommendedName>
        <fullName>Mini-chromosome maintenance complex-binding protein</fullName>
        <shortName>MCM-BP</shortName>
        <shortName>MCM-binding protein</shortName>
    </recommendedName>
</protein>
<gene>
    <name type="primary">Mcmbp</name>
</gene>
<sequence>MPCGEDWLSHPLGIVQGFFAQNGVTPDWEKKVIDYFKEKLKENNAPKWVPSLNEVPLHYLKPNSFVKFRCMIQDMFDPEFYMGVYETVNQNTKARVLHFGKYRDVAECGPQQELDLNSPRSTTSERQTFYCVPVPGESLWVKEAYVNANQARVSPSTSYTPSRHKRSYEDDEDMDLQPNKQKDQHSGARQAGGLGGLHWRGEPKRLETEASSGQQLNSLNLSSPFDLNFPLPGEKGPACLVKVYEDWDCFKVNDVLELYGVLSVDPILSILNNEERDASALLDPMECTDMAEEQRVHSPPASLVPRIHVILAQKLQHINPLLPTCLNKEESRTCQFVSNFMSELSPVRAELLGFLTHALLGDSLAAEYLILHLISTVYTRRDVLPLGKFTVNLSGCPQNSTFTEHLYRIIQHLVPASFRLQMTIENMNQLKLIPHKDYTANRLVSGLLQLPNNTSLVIDETLLEQGQLDTPGVHNVAALSNLITWQKVDYDFSYHQMEFPCNINVLITSEGRSLLPADCQIHLQPQLIPPNMEEYMNGLLSAVLPSVLNKFRIYLTLLRFLDYNLSDDITKAVEDDFVEMRKNDPQSITADDLHQLLVVARFLSLSAGQTTLSRERWLRAKQLEHSRRSRLQQQKSVNGNEL</sequence>